<name>YAJD_ECOL6</name>
<sequence length="115" mass="13364">MAIIPKNYARLESGYREKALKIYPWVCGRCSREFVYSNLRELTVHHIDHDHTNNPEDGSNWELLCLYCHDHEHSKYTEADQYGTTVIAGEDAQKDVGEAKYNPFADLKAMMNKKK</sequence>
<comment type="similarity">
    <text evidence="1">Belongs to the HNH nuclease family.</text>
</comment>
<comment type="sequence caution" evidence="1">
    <conflict type="erroneous initiation">
        <sequence resource="EMBL-CDS" id="AAN78998"/>
    </conflict>
    <text>Extended N-terminus.</text>
</comment>
<protein>
    <recommendedName>
        <fullName>Putative HNH nuclease YajD</fullName>
        <ecNumber>3.1.-.-</ecNumber>
    </recommendedName>
</protein>
<feature type="chain" id="PRO_0000168608" description="Putative HNH nuclease YajD">
    <location>
        <begin position="1"/>
        <end position="115"/>
    </location>
</feature>
<feature type="domain" description="HNH">
    <location>
        <begin position="27"/>
        <end position="75"/>
    </location>
</feature>
<keyword id="KW-0378">Hydrolase</keyword>
<keyword id="KW-0540">Nuclease</keyword>
<keyword id="KW-1185">Reference proteome</keyword>
<dbReference type="EC" id="3.1.-.-"/>
<dbReference type="EMBL" id="AE014075">
    <property type="protein sequence ID" value="AAN78998.1"/>
    <property type="status" value="ALT_INIT"/>
    <property type="molecule type" value="Genomic_DNA"/>
</dbReference>
<dbReference type="RefSeq" id="WP_000974813.1">
    <property type="nucleotide sequence ID" value="NZ_CP051263.1"/>
</dbReference>
<dbReference type="STRING" id="199310.c0520"/>
<dbReference type="GeneID" id="93777050"/>
<dbReference type="KEGG" id="ecc:c0520"/>
<dbReference type="eggNOG" id="COG1403">
    <property type="taxonomic scope" value="Bacteria"/>
</dbReference>
<dbReference type="HOGENOM" id="CLU_136125_1_0_6"/>
<dbReference type="Proteomes" id="UP000001410">
    <property type="component" value="Chromosome"/>
</dbReference>
<dbReference type="GO" id="GO:0005829">
    <property type="term" value="C:cytosol"/>
    <property type="evidence" value="ECO:0007669"/>
    <property type="project" value="TreeGrafter"/>
</dbReference>
<dbReference type="GO" id="GO:0004519">
    <property type="term" value="F:endonuclease activity"/>
    <property type="evidence" value="ECO:0007669"/>
    <property type="project" value="InterPro"/>
</dbReference>
<dbReference type="GO" id="GO:0003676">
    <property type="term" value="F:nucleic acid binding"/>
    <property type="evidence" value="ECO:0007669"/>
    <property type="project" value="InterPro"/>
</dbReference>
<dbReference type="GO" id="GO:0008270">
    <property type="term" value="F:zinc ion binding"/>
    <property type="evidence" value="ECO:0007669"/>
    <property type="project" value="InterPro"/>
</dbReference>
<dbReference type="CDD" id="cd00085">
    <property type="entry name" value="HNHc"/>
    <property type="match status" value="1"/>
</dbReference>
<dbReference type="Gene3D" id="1.10.30.50">
    <property type="match status" value="1"/>
</dbReference>
<dbReference type="InterPro" id="IPR002711">
    <property type="entry name" value="HNH"/>
</dbReference>
<dbReference type="InterPro" id="IPR003615">
    <property type="entry name" value="HNH_nuc"/>
</dbReference>
<dbReference type="NCBIfam" id="NF008448">
    <property type="entry name" value="PRK11295.1"/>
    <property type="match status" value="1"/>
</dbReference>
<dbReference type="PANTHER" id="PTHR41286">
    <property type="entry name" value="HNH NUCLEASE YAJD-RELATED"/>
    <property type="match status" value="1"/>
</dbReference>
<dbReference type="PANTHER" id="PTHR41286:SF1">
    <property type="entry name" value="HNH NUCLEASE YAJD-RELATED"/>
    <property type="match status" value="1"/>
</dbReference>
<dbReference type="Pfam" id="PF01844">
    <property type="entry name" value="HNH"/>
    <property type="match status" value="1"/>
</dbReference>
<dbReference type="SMART" id="SM00507">
    <property type="entry name" value="HNHc"/>
    <property type="match status" value="1"/>
</dbReference>
<gene>
    <name type="primary">yajD</name>
    <name type="ordered locus">c0520</name>
</gene>
<organism>
    <name type="scientific">Escherichia coli O6:H1 (strain CFT073 / ATCC 700928 / UPEC)</name>
    <dbReference type="NCBI Taxonomy" id="199310"/>
    <lineage>
        <taxon>Bacteria</taxon>
        <taxon>Pseudomonadati</taxon>
        <taxon>Pseudomonadota</taxon>
        <taxon>Gammaproteobacteria</taxon>
        <taxon>Enterobacterales</taxon>
        <taxon>Enterobacteriaceae</taxon>
        <taxon>Escherichia</taxon>
    </lineage>
</organism>
<reference key="1">
    <citation type="journal article" date="2002" name="Proc. Natl. Acad. Sci. U.S.A.">
        <title>Extensive mosaic structure revealed by the complete genome sequence of uropathogenic Escherichia coli.</title>
        <authorList>
            <person name="Welch R.A."/>
            <person name="Burland V."/>
            <person name="Plunkett G. III"/>
            <person name="Redford P."/>
            <person name="Roesch P."/>
            <person name="Rasko D."/>
            <person name="Buckles E.L."/>
            <person name="Liou S.-R."/>
            <person name="Boutin A."/>
            <person name="Hackett J."/>
            <person name="Stroud D."/>
            <person name="Mayhew G.F."/>
            <person name="Rose D.J."/>
            <person name="Zhou S."/>
            <person name="Schwartz D.C."/>
            <person name="Perna N.T."/>
            <person name="Mobley H.L.T."/>
            <person name="Donnenberg M.S."/>
            <person name="Blattner F.R."/>
        </authorList>
    </citation>
    <scope>NUCLEOTIDE SEQUENCE [LARGE SCALE GENOMIC DNA]</scope>
    <source>
        <strain>CFT073 / ATCC 700928 / UPEC</strain>
    </source>
</reference>
<proteinExistence type="inferred from homology"/>
<evidence type="ECO:0000305" key="1"/>
<accession>P0AAQ3</accession>
<accession>P19678</accession>
<accession>P77666</accession>